<accession>A8DZH4</accession>
<organism>
    <name type="scientific">Danio rerio</name>
    <name type="common">Zebrafish</name>
    <name type="synonym">Brachydanio rerio</name>
    <dbReference type="NCBI Taxonomy" id="7955"/>
    <lineage>
        <taxon>Eukaryota</taxon>
        <taxon>Metazoa</taxon>
        <taxon>Chordata</taxon>
        <taxon>Craniata</taxon>
        <taxon>Vertebrata</taxon>
        <taxon>Euteleostomi</taxon>
        <taxon>Actinopterygii</taxon>
        <taxon>Neopterygii</taxon>
        <taxon>Teleostei</taxon>
        <taxon>Ostariophysi</taxon>
        <taxon>Cypriniformes</taxon>
        <taxon>Danionidae</taxon>
        <taxon>Danioninae</taxon>
        <taxon>Danio</taxon>
    </lineage>
</organism>
<protein>
    <recommendedName>
        <fullName>Xenotropic and polytropic retrovirus receptor 1 homolog</fullName>
    </recommendedName>
</protein>
<feature type="chain" id="PRO_0000315860" description="Xenotropic and polytropic retrovirus receptor 1 homolog">
    <location>
        <begin position="1"/>
        <end position="693"/>
    </location>
</feature>
<feature type="topological domain" description="Cytoplasmic" evidence="3">
    <location>
        <begin position="1"/>
        <end position="235"/>
    </location>
</feature>
<feature type="transmembrane region" description="Helical" evidence="3">
    <location>
        <begin position="236"/>
        <end position="256"/>
    </location>
</feature>
<feature type="topological domain" description="Extracellular" evidence="3">
    <location>
        <begin position="257"/>
        <end position="267"/>
    </location>
</feature>
<feature type="transmembrane region" description="Helical" evidence="3">
    <location>
        <begin position="268"/>
        <end position="288"/>
    </location>
</feature>
<feature type="topological domain" description="Cytoplasmic" evidence="3">
    <location>
        <begin position="289"/>
        <end position="318"/>
    </location>
</feature>
<feature type="transmembrane region" description="Helical" evidence="3">
    <location>
        <begin position="319"/>
        <end position="339"/>
    </location>
</feature>
<feature type="topological domain" description="Extracellular" evidence="3">
    <location>
        <begin position="340"/>
        <end position="342"/>
    </location>
</feature>
<feature type="transmembrane region" description="Helical" evidence="3">
    <location>
        <begin position="343"/>
        <end position="363"/>
    </location>
</feature>
<feature type="topological domain" description="Cytoplasmic" evidence="3">
    <location>
        <begin position="364"/>
        <end position="405"/>
    </location>
</feature>
<feature type="transmembrane region" description="Helical" evidence="3">
    <location>
        <begin position="406"/>
        <end position="426"/>
    </location>
</feature>
<feature type="topological domain" description="Extracellular" evidence="3">
    <location>
        <begin position="427"/>
        <end position="477"/>
    </location>
</feature>
<feature type="transmembrane region" description="Helical" evidence="3">
    <location>
        <begin position="478"/>
        <end position="498"/>
    </location>
</feature>
<feature type="topological domain" description="Cytoplasmic" evidence="3">
    <location>
        <begin position="499"/>
        <end position="506"/>
    </location>
</feature>
<feature type="transmembrane region" description="Helical" evidence="3">
    <location>
        <begin position="507"/>
        <end position="527"/>
    </location>
</feature>
<feature type="topological domain" description="Extracellular" evidence="3">
    <location>
        <begin position="528"/>
        <end position="560"/>
    </location>
</feature>
<feature type="transmembrane region" description="Helical" evidence="3">
    <location>
        <begin position="561"/>
        <end position="581"/>
    </location>
</feature>
<feature type="topological domain" description="Cytoplasmic" evidence="3">
    <location>
        <begin position="582"/>
        <end position="693"/>
    </location>
</feature>
<feature type="domain" description="SPX" evidence="5">
    <location>
        <begin position="1"/>
        <end position="176"/>
    </location>
</feature>
<feature type="domain" description="EXS" evidence="4">
    <location>
        <begin position="441"/>
        <end position="642"/>
    </location>
</feature>
<feature type="region of interest" description="Important for inositol polyphosphate binding" evidence="1">
    <location>
        <begin position="157"/>
        <end position="164"/>
    </location>
</feature>
<feature type="region of interest" description="Disordered" evidence="6">
    <location>
        <begin position="674"/>
        <end position="693"/>
    </location>
</feature>
<feature type="site" description="Important for inositol polyphosphate binding" evidence="1">
    <location>
        <position position="22"/>
    </location>
</feature>
<feature type="site" description="Important for inositol polyphosphate binding" evidence="1">
    <location>
        <position position="26"/>
    </location>
</feature>
<reference key="1">
    <citation type="journal article" date="2013" name="Nature">
        <title>The zebrafish reference genome sequence and its relationship to the human genome.</title>
        <authorList>
            <person name="Howe K."/>
            <person name="Clark M.D."/>
            <person name="Torroja C.F."/>
            <person name="Torrance J."/>
            <person name="Berthelot C."/>
            <person name="Muffato M."/>
            <person name="Collins J.E."/>
            <person name="Humphray S."/>
            <person name="McLaren K."/>
            <person name="Matthews L."/>
            <person name="McLaren S."/>
            <person name="Sealy I."/>
            <person name="Caccamo M."/>
            <person name="Churcher C."/>
            <person name="Scott C."/>
            <person name="Barrett J.C."/>
            <person name="Koch R."/>
            <person name="Rauch G.J."/>
            <person name="White S."/>
            <person name="Chow W."/>
            <person name="Kilian B."/>
            <person name="Quintais L.T."/>
            <person name="Guerra-Assuncao J.A."/>
            <person name="Zhou Y."/>
            <person name="Gu Y."/>
            <person name="Yen J."/>
            <person name="Vogel J.H."/>
            <person name="Eyre T."/>
            <person name="Redmond S."/>
            <person name="Banerjee R."/>
            <person name="Chi J."/>
            <person name="Fu B."/>
            <person name="Langley E."/>
            <person name="Maguire S.F."/>
            <person name="Laird G.K."/>
            <person name="Lloyd D."/>
            <person name="Kenyon E."/>
            <person name="Donaldson S."/>
            <person name="Sehra H."/>
            <person name="Almeida-King J."/>
            <person name="Loveland J."/>
            <person name="Trevanion S."/>
            <person name="Jones M."/>
            <person name="Quail M."/>
            <person name="Willey D."/>
            <person name="Hunt A."/>
            <person name="Burton J."/>
            <person name="Sims S."/>
            <person name="McLay K."/>
            <person name="Plumb B."/>
            <person name="Davis J."/>
            <person name="Clee C."/>
            <person name="Oliver K."/>
            <person name="Clark R."/>
            <person name="Riddle C."/>
            <person name="Elliot D."/>
            <person name="Threadgold G."/>
            <person name="Harden G."/>
            <person name="Ware D."/>
            <person name="Begum S."/>
            <person name="Mortimore B."/>
            <person name="Kerry G."/>
            <person name="Heath P."/>
            <person name="Phillimore B."/>
            <person name="Tracey A."/>
            <person name="Corby N."/>
            <person name="Dunn M."/>
            <person name="Johnson C."/>
            <person name="Wood J."/>
            <person name="Clark S."/>
            <person name="Pelan S."/>
            <person name="Griffiths G."/>
            <person name="Smith M."/>
            <person name="Glithero R."/>
            <person name="Howden P."/>
            <person name="Barker N."/>
            <person name="Lloyd C."/>
            <person name="Stevens C."/>
            <person name="Harley J."/>
            <person name="Holt K."/>
            <person name="Panagiotidis G."/>
            <person name="Lovell J."/>
            <person name="Beasley H."/>
            <person name="Henderson C."/>
            <person name="Gordon D."/>
            <person name="Auger K."/>
            <person name="Wright D."/>
            <person name="Collins J."/>
            <person name="Raisen C."/>
            <person name="Dyer L."/>
            <person name="Leung K."/>
            <person name="Robertson L."/>
            <person name="Ambridge K."/>
            <person name="Leongamornlert D."/>
            <person name="McGuire S."/>
            <person name="Gilderthorp R."/>
            <person name="Griffiths C."/>
            <person name="Manthravadi D."/>
            <person name="Nichol S."/>
            <person name="Barker G."/>
            <person name="Whitehead S."/>
            <person name="Kay M."/>
            <person name="Brown J."/>
            <person name="Murnane C."/>
            <person name="Gray E."/>
            <person name="Humphries M."/>
            <person name="Sycamore N."/>
            <person name="Barker D."/>
            <person name="Saunders D."/>
            <person name="Wallis J."/>
            <person name="Babbage A."/>
            <person name="Hammond S."/>
            <person name="Mashreghi-Mohammadi M."/>
            <person name="Barr L."/>
            <person name="Martin S."/>
            <person name="Wray P."/>
            <person name="Ellington A."/>
            <person name="Matthews N."/>
            <person name="Ellwood M."/>
            <person name="Woodmansey R."/>
            <person name="Clark G."/>
            <person name="Cooper J."/>
            <person name="Tromans A."/>
            <person name="Grafham D."/>
            <person name="Skuce C."/>
            <person name="Pandian R."/>
            <person name="Andrews R."/>
            <person name="Harrison E."/>
            <person name="Kimberley A."/>
            <person name="Garnett J."/>
            <person name="Fosker N."/>
            <person name="Hall R."/>
            <person name="Garner P."/>
            <person name="Kelly D."/>
            <person name="Bird C."/>
            <person name="Palmer S."/>
            <person name="Gehring I."/>
            <person name="Berger A."/>
            <person name="Dooley C.M."/>
            <person name="Ersan-Urun Z."/>
            <person name="Eser C."/>
            <person name="Geiger H."/>
            <person name="Geisler M."/>
            <person name="Karotki L."/>
            <person name="Kirn A."/>
            <person name="Konantz J."/>
            <person name="Konantz M."/>
            <person name="Oberlander M."/>
            <person name="Rudolph-Geiger S."/>
            <person name="Teucke M."/>
            <person name="Lanz C."/>
            <person name="Raddatz G."/>
            <person name="Osoegawa K."/>
            <person name="Zhu B."/>
            <person name="Rapp A."/>
            <person name="Widaa S."/>
            <person name="Langford C."/>
            <person name="Yang F."/>
            <person name="Schuster S.C."/>
            <person name="Carter N.P."/>
            <person name="Harrow J."/>
            <person name="Ning Z."/>
            <person name="Herrero J."/>
            <person name="Searle S.M."/>
            <person name="Enright A."/>
            <person name="Geisler R."/>
            <person name="Plasterk R.H."/>
            <person name="Lee C."/>
            <person name="Westerfield M."/>
            <person name="de Jong P.J."/>
            <person name="Zon L.I."/>
            <person name="Postlethwait J.H."/>
            <person name="Nusslein-Volhard C."/>
            <person name="Hubbard T.J."/>
            <person name="Roest Crollius H."/>
            <person name="Rogers J."/>
            <person name="Stemple D.L."/>
        </authorList>
    </citation>
    <scope>NUCLEOTIDE SEQUENCE [LARGE SCALE GENOMIC DNA]</scope>
    <source>
        <strain>Tuebingen</strain>
    </source>
</reference>
<reference key="2">
    <citation type="journal article" date="2013" name="Cell Rep.">
        <title>Inorganic phosphate export by the retrovirus receptor XPR1 in metazoans.</title>
        <authorList>
            <person name="Giovannini D."/>
            <person name="Touhami J."/>
            <person name="Charnet P."/>
            <person name="Sitbon M."/>
            <person name="Battini J.L."/>
        </authorList>
    </citation>
    <scope>FUNCTION</scope>
    <scope>SUBCELLULAR LOCATION</scope>
</reference>
<dbReference type="EMBL" id="AL953893">
    <property type="protein sequence ID" value="CAP09231.1"/>
    <property type="molecule type" value="Genomic_DNA"/>
</dbReference>
<dbReference type="RefSeq" id="NP_001119862.1">
    <property type="nucleotide sequence ID" value="NM_001126390.1"/>
</dbReference>
<dbReference type="SMR" id="A8DZH4"/>
<dbReference type="FunCoup" id="A8DZH4">
    <property type="interactions" value="736"/>
</dbReference>
<dbReference type="STRING" id="7955.ENSDARP00000050596"/>
<dbReference type="PaxDb" id="7955-ENSDARP00000050596"/>
<dbReference type="Ensembl" id="ENSDART00000050597">
    <property type="protein sequence ID" value="ENSDARP00000050596"/>
    <property type="gene ID" value="ENSDARG00000029671"/>
</dbReference>
<dbReference type="GeneID" id="558034"/>
<dbReference type="KEGG" id="dre:558034"/>
<dbReference type="AGR" id="ZFIN:ZDB-GENE-060503-266"/>
<dbReference type="CTD" id="558034"/>
<dbReference type="ZFIN" id="ZDB-GENE-060503-266">
    <property type="gene designation" value="xpr1b"/>
</dbReference>
<dbReference type="eggNOG" id="KOG1162">
    <property type="taxonomic scope" value="Eukaryota"/>
</dbReference>
<dbReference type="HOGENOM" id="CLU_006116_3_0_1"/>
<dbReference type="InParanoid" id="A8DZH4"/>
<dbReference type="OMA" id="FMQLYGV"/>
<dbReference type="OrthoDB" id="9970435at2759"/>
<dbReference type="PhylomeDB" id="A8DZH4"/>
<dbReference type="TreeFam" id="TF314643"/>
<dbReference type="PRO" id="PR:A8DZH4"/>
<dbReference type="Proteomes" id="UP000000437">
    <property type="component" value="Chromosome 2"/>
</dbReference>
<dbReference type="Bgee" id="ENSDARG00000029671">
    <property type="expression patterns" value="Expressed in retina and 23 other cell types or tissues"/>
</dbReference>
<dbReference type="GO" id="GO:0005886">
    <property type="term" value="C:plasma membrane"/>
    <property type="evidence" value="ECO:0000250"/>
    <property type="project" value="UniProtKB"/>
</dbReference>
<dbReference type="GO" id="GO:0015562">
    <property type="term" value="F:efflux transmembrane transporter activity"/>
    <property type="evidence" value="ECO:0000315"/>
    <property type="project" value="UniProtKB"/>
</dbReference>
<dbReference type="GO" id="GO:0000822">
    <property type="term" value="F:inositol hexakisphosphate binding"/>
    <property type="evidence" value="ECO:0000250"/>
    <property type="project" value="UniProtKB"/>
</dbReference>
<dbReference type="GO" id="GO:0005315">
    <property type="term" value="F:phosphate transmembrane transporter activity"/>
    <property type="evidence" value="ECO:0000314"/>
    <property type="project" value="ZFIN"/>
</dbReference>
<dbReference type="GO" id="GO:0016036">
    <property type="term" value="P:cellular response to phosphate starvation"/>
    <property type="evidence" value="ECO:0000318"/>
    <property type="project" value="GO_Central"/>
</dbReference>
<dbReference type="GO" id="GO:0030643">
    <property type="term" value="P:intracellular phosphate ion homeostasis"/>
    <property type="evidence" value="ECO:0000250"/>
    <property type="project" value="UniProtKB"/>
</dbReference>
<dbReference type="GO" id="GO:0030225">
    <property type="term" value="P:macrophage differentiation"/>
    <property type="evidence" value="ECO:0000315"/>
    <property type="project" value="ZFIN"/>
</dbReference>
<dbReference type="GO" id="GO:0014004">
    <property type="term" value="P:microglia differentiation"/>
    <property type="evidence" value="ECO:0000315"/>
    <property type="project" value="ZFIN"/>
</dbReference>
<dbReference type="GO" id="GO:0035435">
    <property type="term" value="P:phosphate ion transmembrane transport"/>
    <property type="evidence" value="ECO:0000315"/>
    <property type="project" value="UniProtKB"/>
</dbReference>
<dbReference type="GO" id="GO:0006817">
    <property type="term" value="P:phosphate ion transport"/>
    <property type="evidence" value="ECO:0000318"/>
    <property type="project" value="GO_Central"/>
</dbReference>
<dbReference type="GO" id="GO:0001501">
    <property type="term" value="P:skeletal system development"/>
    <property type="evidence" value="ECO:0000315"/>
    <property type="project" value="ZFIN"/>
</dbReference>
<dbReference type="CDD" id="cd14477">
    <property type="entry name" value="SPX_XPR1_like"/>
    <property type="match status" value="1"/>
</dbReference>
<dbReference type="InterPro" id="IPR004342">
    <property type="entry name" value="EXS_C"/>
</dbReference>
<dbReference type="InterPro" id="IPR004331">
    <property type="entry name" value="SPX_dom"/>
</dbReference>
<dbReference type="PANTHER" id="PTHR10783:SF135">
    <property type="entry name" value="XENOTROPIC AND POLYTROPIC RETROVIRUS RECEPTOR 1 HOMOLOG"/>
    <property type="match status" value="1"/>
</dbReference>
<dbReference type="PANTHER" id="PTHR10783">
    <property type="entry name" value="XENOTROPIC AND POLYTROPIC RETROVIRUS RECEPTOR 1-RELATED"/>
    <property type="match status" value="1"/>
</dbReference>
<dbReference type="Pfam" id="PF03124">
    <property type="entry name" value="EXS"/>
    <property type="match status" value="1"/>
</dbReference>
<dbReference type="Pfam" id="PF03105">
    <property type="entry name" value="SPX"/>
    <property type="match status" value="3"/>
</dbReference>
<dbReference type="PROSITE" id="PS51380">
    <property type="entry name" value="EXS"/>
    <property type="match status" value="1"/>
</dbReference>
<dbReference type="PROSITE" id="PS51382">
    <property type="entry name" value="SPX"/>
    <property type="match status" value="1"/>
</dbReference>
<proteinExistence type="inferred from homology"/>
<evidence type="ECO:0000250" key="1">
    <source>
        <dbReference type="UniProtKB" id="P43585"/>
    </source>
</evidence>
<evidence type="ECO:0000250" key="2">
    <source>
        <dbReference type="UniProtKB" id="Q9UBH6"/>
    </source>
</evidence>
<evidence type="ECO:0000255" key="3"/>
<evidence type="ECO:0000255" key="4">
    <source>
        <dbReference type="PROSITE-ProRule" id="PRU00712"/>
    </source>
</evidence>
<evidence type="ECO:0000255" key="5">
    <source>
        <dbReference type="PROSITE-ProRule" id="PRU00714"/>
    </source>
</evidence>
<evidence type="ECO:0000256" key="6">
    <source>
        <dbReference type="SAM" id="MobiDB-lite"/>
    </source>
</evidence>
<evidence type="ECO:0000269" key="7">
    <source>
    </source>
</evidence>
<evidence type="ECO:0000305" key="8"/>
<evidence type="ECO:0000305" key="9">
    <source>
    </source>
</evidence>
<sequence length="693" mass="81281">MKFTEHLSAHITPEWRKQYIQYEAFKEMLYSAQDQAPSIEVTDEDTVKRYYAKFEEKFFQTCEKELAKINTFYSEKLAEAQRRFATLQNELQSSLDAQRESSRAAGLRHRRTVFHLSQQERCKHRNIKDLQLAFSEFYLSLILLQNYQNLNFTGFRKILKKHDKIFETSRGADWRVAHVEVAPFYTCKKITQLISETETLVTTELEGGDRQKAMKRLRVPPLGAAQPAPAWTTFRVGLYCGVFVALTVTVIIAGVVKLVEHFGDNTDVWPLIRIYRGGFLLIEFLFLLGINTYGWRQAGVNHVLIFELNPRNNLSHQHLFEIAGFLGVLWCVSILSCLFAENTLIPIHMNPLALYGFFFLFLINPLKTCYYKSRFWLLKLLFRVVTAPFHRVGFADFWLADQLNSLVVVLMDLEYMICFYSLELNWTMSEGELWIKEGERICYSYSYGVRAVIKCLPAWFRFVQCLRRYRDTKRAFPHLVNAGKYSTTFFVVIFEALFKTHSGDERFVFLYIMIACRIVNSCYTLLWDLKMDWGLFDRNAGENTLLREEIVYPQKAYYYCAIVEDVILRFAWTIPLSLEVVYDRPVISNILGTVLPPLEVFRRFVWNFFRLENEHLNNCGEFRAVRDISVAPLNADDQTLLEQMMDQEDGVRNRLGKKNWKRSYSMSLRRPRLSSQSKVRDTKVLIEDTDDDT</sequence>
<keyword id="KW-1003">Cell membrane</keyword>
<keyword id="KW-0472">Membrane</keyword>
<keyword id="KW-1185">Reference proteome</keyword>
<keyword id="KW-0812">Transmembrane</keyword>
<keyword id="KW-1133">Transmembrane helix</keyword>
<gene>
    <name type="primary">xpr1</name>
    <name type="ORF">si:dkey-60b12.7</name>
</gene>
<name>XPR1_DANRE</name>
<comment type="function">
    <text evidence="2 7">Plays a role in phosphate homeostasis. Mediates phosphate export from the cell (PubMed:23791524). Binds inositol hexakisphosphate (Ins6P) and similar inositol polyphosphates, such as 5-diphospho-inositol pentakisphosphate (5-InsP7); these are important intracellular signaling molecules (By similarity).</text>
</comment>
<comment type="subcellular location">
    <subcellularLocation>
        <location evidence="9">Cell membrane</location>
        <topology evidence="8">Multi-pass membrane protein</topology>
    </subcellularLocation>
</comment>
<comment type="domain">
    <text evidence="2">The SPX domain has high affinity for inositol polyphosphates, such as myo-inositol hexakisphosphate and 5-diphospho-myo-inositol pentakisphosphate (5-InsP7). Its affinity for inorganic phosphate is tow to three orders of magnitude lower.</text>
</comment>
<comment type="similarity">
    <text evidence="8">Belongs to the SYG1 (TC 2.A.94) family.</text>
</comment>